<evidence type="ECO:0000255" key="1">
    <source>
        <dbReference type="HAMAP-Rule" id="MF_01220"/>
    </source>
</evidence>
<accession>Q4USQ8</accession>
<sequence>MSELSYRRILLKLSGEALMGDGDYGIDPKVINRLAHEVIEAQQAGAQVALVIGGGNIFRGAGLAASGMDRVTGDHMGMLATVINALAMQDALEKLGAKVRVMSAIKINDVCEDFIRRRAIRHLEKGRIAIFAAGTGNPFFTTDSGAALRAIEIGADLLLKATKVDGVYDKDPKKHSDAVRYDSLTYDEVIMQGLEVMDTAAFALARDSDLPLRIFGMSEPGVLLRILHGAQIGTLVQGRS</sequence>
<keyword id="KW-0067">ATP-binding</keyword>
<keyword id="KW-0963">Cytoplasm</keyword>
<keyword id="KW-0418">Kinase</keyword>
<keyword id="KW-0547">Nucleotide-binding</keyword>
<keyword id="KW-0665">Pyrimidine biosynthesis</keyword>
<keyword id="KW-0808">Transferase</keyword>
<gene>
    <name evidence="1" type="primary">pyrH</name>
    <name type="ordered locus">XC_2867</name>
</gene>
<organism>
    <name type="scientific">Xanthomonas campestris pv. campestris (strain 8004)</name>
    <dbReference type="NCBI Taxonomy" id="314565"/>
    <lineage>
        <taxon>Bacteria</taxon>
        <taxon>Pseudomonadati</taxon>
        <taxon>Pseudomonadota</taxon>
        <taxon>Gammaproteobacteria</taxon>
        <taxon>Lysobacterales</taxon>
        <taxon>Lysobacteraceae</taxon>
        <taxon>Xanthomonas</taxon>
    </lineage>
</organism>
<comment type="function">
    <text evidence="1">Catalyzes the reversible phosphorylation of UMP to UDP.</text>
</comment>
<comment type="catalytic activity">
    <reaction evidence="1">
        <text>UMP + ATP = UDP + ADP</text>
        <dbReference type="Rhea" id="RHEA:24400"/>
        <dbReference type="ChEBI" id="CHEBI:30616"/>
        <dbReference type="ChEBI" id="CHEBI:57865"/>
        <dbReference type="ChEBI" id="CHEBI:58223"/>
        <dbReference type="ChEBI" id="CHEBI:456216"/>
        <dbReference type="EC" id="2.7.4.22"/>
    </reaction>
</comment>
<comment type="activity regulation">
    <text evidence="1">Inhibited by UTP.</text>
</comment>
<comment type="pathway">
    <text evidence="1">Pyrimidine metabolism; CTP biosynthesis via de novo pathway; UDP from UMP (UMPK route): step 1/1.</text>
</comment>
<comment type="subunit">
    <text evidence="1">Homohexamer.</text>
</comment>
<comment type="subcellular location">
    <subcellularLocation>
        <location evidence="1">Cytoplasm</location>
    </subcellularLocation>
</comment>
<comment type="similarity">
    <text evidence="1">Belongs to the UMP kinase family.</text>
</comment>
<reference key="1">
    <citation type="journal article" date="2005" name="Genome Res.">
        <title>Comparative and functional genomic analyses of the pathogenicity of phytopathogen Xanthomonas campestris pv. campestris.</title>
        <authorList>
            <person name="Qian W."/>
            <person name="Jia Y."/>
            <person name="Ren S.-X."/>
            <person name="He Y.-Q."/>
            <person name="Feng J.-X."/>
            <person name="Lu L.-F."/>
            <person name="Sun Q."/>
            <person name="Ying G."/>
            <person name="Tang D.-J."/>
            <person name="Tang H."/>
            <person name="Wu W."/>
            <person name="Hao P."/>
            <person name="Wang L."/>
            <person name="Jiang B.-L."/>
            <person name="Zeng S."/>
            <person name="Gu W.-Y."/>
            <person name="Lu G."/>
            <person name="Rong L."/>
            <person name="Tian Y."/>
            <person name="Yao Z."/>
            <person name="Fu G."/>
            <person name="Chen B."/>
            <person name="Fang R."/>
            <person name="Qiang B."/>
            <person name="Chen Z."/>
            <person name="Zhao G.-P."/>
            <person name="Tang J.-L."/>
            <person name="He C."/>
        </authorList>
    </citation>
    <scope>NUCLEOTIDE SEQUENCE [LARGE SCALE GENOMIC DNA]</scope>
    <source>
        <strain>8004</strain>
    </source>
</reference>
<dbReference type="EC" id="2.7.4.22" evidence="1"/>
<dbReference type="EMBL" id="CP000050">
    <property type="protein sequence ID" value="AAY49915.1"/>
    <property type="molecule type" value="Genomic_DNA"/>
</dbReference>
<dbReference type="RefSeq" id="WP_011036563.1">
    <property type="nucleotide sequence ID" value="NZ_CP155948.1"/>
</dbReference>
<dbReference type="SMR" id="Q4USQ8"/>
<dbReference type="KEGG" id="xcb:XC_2867"/>
<dbReference type="HOGENOM" id="CLU_033861_0_0_6"/>
<dbReference type="UniPathway" id="UPA00159">
    <property type="reaction ID" value="UER00275"/>
</dbReference>
<dbReference type="Proteomes" id="UP000000420">
    <property type="component" value="Chromosome"/>
</dbReference>
<dbReference type="GO" id="GO:0005829">
    <property type="term" value="C:cytosol"/>
    <property type="evidence" value="ECO:0007669"/>
    <property type="project" value="TreeGrafter"/>
</dbReference>
<dbReference type="GO" id="GO:0005524">
    <property type="term" value="F:ATP binding"/>
    <property type="evidence" value="ECO:0007669"/>
    <property type="project" value="UniProtKB-KW"/>
</dbReference>
<dbReference type="GO" id="GO:0033862">
    <property type="term" value="F:UMP kinase activity"/>
    <property type="evidence" value="ECO:0007669"/>
    <property type="project" value="UniProtKB-EC"/>
</dbReference>
<dbReference type="GO" id="GO:0044210">
    <property type="term" value="P:'de novo' CTP biosynthetic process"/>
    <property type="evidence" value="ECO:0007669"/>
    <property type="project" value="UniProtKB-UniRule"/>
</dbReference>
<dbReference type="GO" id="GO:0006225">
    <property type="term" value="P:UDP biosynthetic process"/>
    <property type="evidence" value="ECO:0007669"/>
    <property type="project" value="TreeGrafter"/>
</dbReference>
<dbReference type="CDD" id="cd04254">
    <property type="entry name" value="AAK_UMPK-PyrH-Ec"/>
    <property type="match status" value="1"/>
</dbReference>
<dbReference type="FunFam" id="3.40.1160.10:FF:000001">
    <property type="entry name" value="Uridylate kinase"/>
    <property type="match status" value="1"/>
</dbReference>
<dbReference type="Gene3D" id="3.40.1160.10">
    <property type="entry name" value="Acetylglutamate kinase-like"/>
    <property type="match status" value="1"/>
</dbReference>
<dbReference type="HAMAP" id="MF_01220_B">
    <property type="entry name" value="PyrH_B"/>
    <property type="match status" value="1"/>
</dbReference>
<dbReference type="InterPro" id="IPR036393">
    <property type="entry name" value="AceGlu_kinase-like_sf"/>
</dbReference>
<dbReference type="InterPro" id="IPR001048">
    <property type="entry name" value="Asp/Glu/Uridylate_kinase"/>
</dbReference>
<dbReference type="InterPro" id="IPR011817">
    <property type="entry name" value="Uridylate_kinase"/>
</dbReference>
<dbReference type="InterPro" id="IPR015963">
    <property type="entry name" value="Uridylate_kinase_bac"/>
</dbReference>
<dbReference type="NCBIfam" id="TIGR02075">
    <property type="entry name" value="pyrH_bact"/>
    <property type="match status" value="1"/>
</dbReference>
<dbReference type="PANTHER" id="PTHR42833">
    <property type="entry name" value="URIDYLATE KINASE"/>
    <property type="match status" value="1"/>
</dbReference>
<dbReference type="PANTHER" id="PTHR42833:SF4">
    <property type="entry name" value="URIDYLATE KINASE PUMPKIN, CHLOROPLASTIC"/>
    <property type="match status" value="1"/>
</dbReference>
<dbReference type="Pfam" id="PF00696">
    <property type="entry name" value="AA_kinase"/>
    <property type="match status" value="1"/>
</dbReference>
<dbReference type="PIRSF" id="PIRSF005650">
    <property type="entry name" value="Uridylate_kin"/>
    <property type="match status" value="1"/>
</dbReference>
<dbReference type="SUPFAM" id="SSF53633">
    <property type="entry name" value="Carbamate kinase-like"/>
    <property type="match status" value="1"/>
</dbReference>
<protein>
    <recommendedName>
        <fullName evidence="1">Uridylate kinase</fullName>
        <shortName evidence="1">UK</shortName>
        <ecNumber evidence="1">2.7.4.22</ecNumber>
    </recommendedName>
    <alternativeName>
        <fullName evidence="1">Uridine monophosphate kinase</fullName>
        <shortName evidence="1">UMP kinase</shortName>
        <shortName evidence="1">UMPK</shortName>
    </alternativeName>
</protein>
<feature type="chain" id="PRO_1000054053" description="Uridylate kinase">
    <location>
        <begin position="1"/>
        <end position="240"/>
    </location>
</feature>
<feature type="binding site" evidence="1">
    <location>
        <begin position="12"/>
        <end position="15"/>
    </location>
    <ligand>
        <name>ATP</name>
        <dbReference type="ChEBI" id="CHEBI:30616"/>
    </ligand>
</feature>
<feature type="binding site" evidence="1">
    <location>
        <position position="54"/>
    </location>
    <ligand>
        <name>UMP</name>
        <dbReference type="ChEBI" id="CHEBI:57865"/>
    </ligand>
</feature>
<feature type="binding site" evidence="1">
    <location>
        <position position="55"/>
    </location>
    <ligand>
        <name>ATP</name>
        <dbReference type="ChEBI" id="CHEBI:30616"/>
    </ligand>
</feature>
<feature type="binding site" evidence="1">
    <location>
        <position position="59"/>
    </location>
    <ligand>
        <name>ATP</name>
        <dbReference type="ChEBI" id="CHEBI:30616"/>
    </ligand>
</feature>
<feature type="binding site" evidence="1">
    <location>
        <position position="74"/>
    </location>
    <ligand>
        <name>UMP</name>
        <dbReference type="ChEBI" id="CHEBI:57865"/>
    </ligand>
</feature>
<feature type="binding site" evidence="1">
    <location>
        <begin position="135"/>
        <end position="142"/>
    </location>
    <ligand>
        <name>UMP</name>
        <dbReference type="ChEBI" id="CHEBI:57865"/>
    </ligand>
</feature>
<feature type="binding site" evidence="1">
    <location>
        <position position="162"/>
    </location>
    <ligand>
        <name>ATP</name>
        <dbReference type="ChEBI" id="CHEBI:30616"/>
    </ligand>
</feature>
<feature type="binding site" evidence="1">
    <location>
        <position position="168"/>
    </location>
    <ligand>
        <name>ATP</name>
        <dbReference type="ChEBI" id="CHEBI:30616"/>
    </ligand>
</feature>
<feature type="binding site" evidence="1">
    <location>
        <position position="171"/>
    </location>
    <ligand>
        <name>ATP</name>
        <dbReference type="ChEBI" id="CHEBI:30616"/>
    </ligand>
</feature>
<proteinExistence type="inferred from homology"/>
<name>PYRH_XANC8</name>